<sequence>MLRIITQQADVKAELQRICDRTHDEQVLHKEATVREVLQAVKRQGDKAVLHYTDEFDNQILKAEELRVTGSELDAAYQQVSKELLEAIQLASRQIEAFHRQRVPKSWVHFGDDDIVLGKRYTPVDRAGLYVPGGRAAYVSTVLMNAIPAKVAGVPRIVMATPPGAQKAINPAVLVAAQEVGVQEIYRVGGAQAIAALAYGTETIPKVDVITGPGNIYVTLAKKLVYGTVGIDSLAGPSEVLIIADEGANPVHVATDMLAQAEHDPMAAAILFTTDPALAKNVQVAVERQLVDHPRRIDTEKAIAHYGLIVLVESLDAAAELSNEFAPEHLELEVKDPWAVLPNIRHAGAIFLGYSTPEAVGDYLAGPNHTLPTSGAARYASALSVETFLKHSSIIQYSQTALNKVAGAIDALATAEGLPSHADSVKRRIQQDE</sequence>
<feature type="chain" id="PRO_0000229849" description="Histidinol dehydrogenase 2">
    <location>
        <begin position="1"/>
        <end position="433"/>
    </location>
</feature>
<feature type="active site" description="Proton acceptor" evidence="1">
    <location>
        <position position="328"/>
    </location>
</feature>
<feature type="active site" description="Proton acceptor" evidence="1">
    <location>
        <position position="329"/>
    </location>
</feature>
<feature type="binding site" evidence="1">
    <location>
        <position position="130"/>
    </location>
    <ligand>
        <name>NAD(+)</name>
        <dbReference type="ChEBI" id="CHEBI:57540"/>
    </ligand>
</feature>
<feature type="binding site" evidence="1">
    <location>
        <position position="192"/>
    </location>
    <ligand>
        <name>NAD(+)</name>
        <dbReference type="ChEBI" id="CHEBI:57540"/>
    </ligand>
</feature>
<feature type="binding site" evidence="1">
    <location>
        <position position="215"/>
    </location>
    <ligand>
        <name>NAD(+)</name>
        <dbReference type="ChEBI" id="CHEBI:57540"/>
    </ligand>
</feature>
<feature type="binding site" evidence="1">
    <location>
        <position position="238"/>
    </location>
    <ligand>
        <name>substrate</name>
    </ligand>
</feature>
<feature type="binding site" evidence="1">
    <location>
        <position position="260"/>
    </location>
    <ligand>
        <name>substrate</name>
    </ligand>
</feature>
<feature type="binding site" evidence="1">
    <location>
        <position position="260"/>
    </location>
    <ligand>
        <name>Zn(2+)</name>
        <dbReference type="ChEBI" id="CHEBI:29105"/>
    </ligand>
</feature>
<feature type="binding site" evidence="1">
    <location>
        <position position="263"/>
    </location>
    <ligand>
        <name>substrate</name>
    </ligand>
</feature>
<feature type="binding site" evidence="1">
    <location>
        <position position="263"/>
    </location>
    <ligand>
        <name>Zn(2+)</name>
        <dbReference type="ChEBI" id="CHEBI:29105"/>
    </ligand>
</feature>
<feature type="binding site" evidence="1">
    <location>
        <position position="329"/>
    </location>
    <ligand>
        <name>substrate</name>
    </ligand>
</feature>
<feature type="binding site" evidence="1">
    <location>
        <position position="362"/>
    </location>
    <ligand>
        <name>substrate</name>
    </ligand>
</feature>
<feature type="binding site" evidence="1">
    <location>
        <position position="362"/>
    </location>
    <ligand>
        <name>Zn(2+)</name>
        <dbReference type="ChEBI" id="CHEBI:29105"/>
    </ligand>
</feature>
<feature type="binding site" evidence="1">
    <location>
        <position position="416"/>
    </location>
    <ligand>
        <name>substrate</name>
    </ligand>
</feature>
<feature type="binding site" evidence="1">
    <location>
        <position position="421"/>
    </location>
    <ligand>
        <name>substrate</name>
    </ligand>
</feature>
<feature type="binding site" evidence="1">
    <location>
        <position position="421"/>
    </location>
    <ligand>
        <name>Zn(2+)</name>
        <dbReference type="ChEBI" id="CHEBI:29105"/>
    </ligand>
</feature>
<reference key="1">
    <citation type="journal article" date="2014" name="Stand. Genomic Sci.">
        <title>Complete genome sequence of Anabaena variabilis ATCC 29413.</title>
        <authorList>
            <person name="Thiel T."/>
            <person name="Pratte B.S."/>
            <person name="Zhong J."/>
            <person name="Goodwin L."/>
            <person name="Copeland A."/>
            <person name="Lucas S."/>
            <person name="Han C."/>
            <person name="Pitluck S."/>
            <person name="Land M.L."/>
            <person name="Kyrpides N.C."/>
            <person name="Woyke T."/>
        </authorList>
    </citation>
    <scope>NUCLEOTIDE SEQUENCE [LARGE SCALE GENOMIC DNA]</scope>
    <source>
        <strain>ATCC 29413 / PCC 7937</strain>
    </source>
</reference>
<protein>
    <recommendedName>
        <fullName evidence="1">Histidinol dehydrogenase 2</fullName>
        <shortName evidence="1">HDH 2</shortName>
        <ecNumber evidence="1">1.1.1.23</ecNumber>
    </recommendedName>
</protein>
<name>HISX2_TRIV2</name>
<gene>
    <name evidence="1" type="primary">hisD2</name>
    <name type="ordered locus">Ava_4204</name>
</gene>
<evidence type="ECO:0000255" key="1">
    <source>
        <dbReference type="HAMAP-Rule" id="MF_01024"/>
    </source>
</evidence>
<comment type="function">
    <text evidence="1">Catalyzes the sequential NAD-dependent oxidations of L-histidinol to L-histidinaldehyde and then to L-histidine.</text>
</comment>
<comment type="catalytic activity">
    <reaction evidence="1">
        <text>L-histidinol + 2 NAD(+) + H2O = L-histidine + 2 NADH + 3 H(+)</text>
        <dbReference type="Rhea" id="RHEA:20641"/>
        <dbReference type="ChEBI" id="CHEBI:15377"/>
        <dbReference type="ChEBI" id="CHEBI:15378"/>
        <dbReference type="ChEBI" id="CHEBI:57540"/>
        <dbReference type="ChEBI" id="CHEBI:57595"/>
        <dbReference type="ChEBI" id="CHEBI:57699"/>
        <dbReference type="ChEBI" id="CHEBI:57945"/>
        <dbReference type="EC" id="1.1.1.23"/>
    </reaction>
</comment>
<comment type="cofactor">
    <cofactor evidence="1">
        <name>Zn(2+)</name>
        <dbReference type="ChEBI" id="CHEBI:29105"/>
    </cofactor>
    <text evidence="1">Binds 1 zinc ion per subunit.</text>
</comment>
<comment type="pathway">
    <text evidence="1">Amino-acid biosynthesis; L-histidine biosynthesis; L-histidine from 5-phospho-alpha-D-ribose 1-diphosphate: step 9/9.</text>
</comment>
<comment type="similarity">
    <text evidence="1">Belongs to the histidinol dehydrogenase family.</text>
</comment>
<keyword id="KW-0028">Amino-acid biosynthesis</keyword>
<keyword id="KW-0368">Histidine biosynthesis</keyword>
<keyword id="KW-0479">Metal-binding</keyword>
<keyword id="KW-0520">NAD</keyword>
<keyword id="KW-0560">Oxidoreductase</keyword>
<keyword id="KW-0862">Zinc</keyword>
<organism>
    <name type="scientific">Trichormus variabilis (strain ATCC 29413 / PCC 7937)</name>
    <name type="common">Anabaena variabilis</name>
    <dbReference type="NCBI Taxonomy" id="240292"/>
    <lineage>
        <taxon>Bacteria</taxon>
        <taxon>Bacillati</taxon>
        <taxon>Cyanobacteriota</taxon>
        <taxon>Cyanophyceae</taxon>
        <taxon>Nostocales</taxon>
        <taxon>Nostocaceae</taxon>
        <taxon>Trichormus</taxon>
    </lineage>
</organism>
<accession>Q3M5D3</accession>
<dbReference type="EC" id="1.1.1.23" evidence="1"/>
<dbReference type="EMBL" id="CP000117">
    <property type="protein sequence ID" value="ABA23803.1"/>
    <property type="molecule type" value="Genomic_DNA"/>
</dbReference>
<dbReference type="SMR" id="Q3M5D3"/>
<dbReference type="STRING" id="240292.Ava_4204"/>
<dbReference type="KEGG" id="ava:Ava_4204"/>
<dbReference type="eggNOG" id="COG0141">
    <property type="taxonomic scope" value="Bacteria"/>
</dbReference>
<dbReference type="HOGENOM" id="CLU_006732_3_3_3"/>
<dbReference type="UniPathway" id="UPA00031">
    <property type="reaction ID" value="UER00014"/>
</dbReference>
<dbReference type="Proteomes" id="UP000002533">
    <property type="component" value="Chromosome"/>
</dbReference>
<dbReference type="GO" id="GO:0005829">
    <property type="term" value="C:cytosol"/>
    <property type="evidence" value="ECO:0007669"/>
    <property type="project" value="TreeGrafter"/>
</dbReference>
<dbReference type="GO" id="GO:0004399">
    <property type="term" value="F:histidinol dehydrogenase activity"/>
    <property type="evidence" value="ECO:0007669"/>
    <property type="project" value="UniProtKB-UniRule"/>
</dbReference>
<dbReference type="GO" id="GO:0051287">
    <property type="term" value="F:NAD binding"/>
    <property type="evidence" value="ECO:0007669"/>
    <property type="project" value="InterPro"/>
</dbReference>
<dbReference type="GO" id="GO:0008270">
    <property type="term" value="F:zinc ion binding"/>
    <property type="evidence" value="ECO:0007669"/>
    <property type="project" value="UniProtKB-UniRule"/>
</dbReference>
<dbReference type="GO" id="GO:0000105">
    <property type="term" value="P:L-histidine biosynthetic process"/>
    <property type="evidence" value="ECO:0007669"/>
    <property type="project" value="UniProtKB-UniRule"/>
</dbReference>
<dbReference type="CDD" id="cd06572">
    <property type="entry name" value="Histidinol_dh"/>
    <property type="match status" value="1"/>
</dbReference>
<dbReference type="FunFam" id="3.40.50.1980:FF:000001">
    <property type="entry name" value="Histidinol dehydrogenase"/>
    <property type="match status" value="1"/>
</dbReference>
<dbReference type="FunFam" id="3.40.50.1980:FF:000026">
    <property type="entry name" value="Histidinol dehydrogenase"/>
    <property type="match status" value="1"/>
</dbReference>
<dbReference type="Gene3D" id="1.20.5.1300">
    <property type="match status" value="1"/>
</dbReference>
<dbReference type="Gene3D" id="3.40.50.1980">
    <property type="entry name" value="Nitrogenase molybdenum iron protein domain"/>
    <property type="match status" value="2"/>
</dbReference>
<dbReference type="HAMAP" id="MF_01024">
    <property type="entry name" value="HisD"/>
    <property type="match status" value="1"/>
</dbReference>
<dbReference type="InterPro" id="IPR016161">
    <property type="entry name" value="Ald_DH/histidinol_DH"/>
</dbReference>
<dbReference type="InterPro" id="IPR001692">
    <property type="entry name" value="Histidinol_DH_CS"/>
</dbReference>
<dbReference type="InterPro" id="IPR022695">
    <property type="entry name" value="Histidinol_DH_monofunct"/>
</dbReference>
<dbReference type="InterPro" id="IPR012131">
    <property type="entry name" value="Hstdl_DH"/>
</dbReference>
<dbReference type="NCBIfam" id="TIGR00069">
    <property type="entry name" value="hisD"/>
    <property type="match status" value="1"/>
</dbReference>
<dbReference type="PANTHER" id="PTHR21256:SF2">
    <property type="entry name" value="HISTIDINE BIOSYNTHESIS TRIFUNCTIONAL PROTEIN"/>
    <property type="match status" value="1"/>
</dbReference>
<dbReference type="PANTHER" id="PTHR21256">
    <property type="entry name" value="HISTIDINOL DEHYDROGENASE HDH"/>
    <property type="match status" value="1"/>
</dbReference>
<dbReference type="Pfam" id="PF00815">
    <property type="entry name" value="Histidinol_dh"/>
    <property type="match status" value="1"/>
</dbReference>
<dbReference type="PIRSF" id="PIRSF000099">
    <property type="entry name" value="Histidinol_dh"/>
    <property type="match status" value="1"/>
</dbReference>
<dbReference type="PRINTS" id="PR00083">
    <property type="entry name" value="HOLDHDRGNASE"/>
</dbReference>
<dbReference type="SUPFAM" id="SSF53720">
    <property type="entry name" value="ALDH-like"/>
    <property type="match status" value="1"/>
</dbReference>
<dbReference type="PROSITE" id="PS00611">
    <property type="entry name" value="HISOL_DEHYDROGENASE"/>
    <property type="match status" value="1"/>
</dbReference>
<proteinExistence type="inferred from homology"/>